<sequence>MYISKQPFRKSKQPFRKSKQPFHKSKQPFRKFKQPFRKSKQPFRRRSRIGPGDRIDYRNMSLINRFISEQGKILSRRINRLTLKQQRLITLAIKQARILSFLPFRNYENEKQFQAQAISIITGPRHRKNRHIPQLTQKFNSNRNLRNSNQNLRNNNRNLSSDC</sequence>
<name>RR18_SACHY</name>
<keyword id="KW-0150">Chloroplast</keyword>
<keyword id="KW-0934">Plastid</keyword>
<keyword id="KW-0687">Ribonucleoprotein</keyword>
<keyword id="KW-0689">Ribosomal protein</keyword>
<keyword id="KW-0694">RNA-binding</keyword>
<keyword id="KW-0699">rRNA-binding</keyword>
<proteinExistence type="inferred from homology"/>
<evidence type="ECO:0000255" key="1">
    <source>
        <dbReference type="HAMAP-Rule" id="MF_00270"/>
    </source>
</evidence>
<evidence type="ECO:0000256" key="2">
    <source>
        <dbReference type="SAM" id="MobiDB-lite"/>
    </source>
</evidence>
<evidence type="ECO:0000305" key="3"/>
<comment type="subunit">
    <text>Part of the 30S ribosomal subunit.</text>
</comment>
<comment type="subcellular location">
    <subcellularLocation>
        <location>Plastid</location>
        <location>Chloroplast</location>
    </subcellularLocation>
</comment>
<comment type="similarity">
    <text evidence="1">Belongs to the bacterial ribosomal protein bS18 family.</text>
</comment>
<protein>
    <recommendedName>
        <fullName evidence="1">Small ribosomal subunit protein bS18c</fullName>
    </recommendedName>
    <alternativeName>
        <fullName evidence="3">30S ribosomal protein S18, chloroplastic</fullName>
    </alternativeName>
</protein>
<accession>Q6L379</accession>
<organism>
    <name type="scientific">Saccharum hybrid</name>
    <name type="common">Sugarcane</name>
    <dbReference type="NCBI Taxonomy" id="15819"/>
    <lineage>
        <taxon>Eukaryota</taxon>
        <taxon>Viridiplantae</taxon>
        <taxon>Streptophyta</taxon>
        <taxon>Embryophyta</taxon>
        <taxon>Tracheophyta</taxon>
        <taxon>Spermatophyta</taxon>
        <taxon>Magnoliopsida</taxon>
        <taxon>Liliopsida</taxon>
        <taxon>Poales</taxon>
        <taxon>Poaceae</taxon>
        <taxon>PACMAD clade</taxon>
        <taxon>Panicoideae</taxon>
        <taxon>Andropogonodae</taxon>
        <taxon>Andropogoneae</taxon>
        <taxon>Saccharinae</taxon>
        <taxon>Saccharum</taxon>
    </lineage>
</organism>
<feature type="chain" id="PRO_0000111309" description="Small ribosomal subunit protein bS18c">
    <location>
        <begin position="1"/>
        <end position="163"/>
    </location>
</feature>
<feature type="region of interest" description="Disordered" evidence="2">
    <location>
        <begin position="1"/>
        <end position="52"/>
    </location>
</feature>
<feature type="region of interest" description="Disordered" evidence="2">
    <location>
        <begin position="144"/>
        <end position="163"/>
    </location>
</feature>
<feature type="compositionally biased region" description="Basic residues" evidence="2">
    <location>
        <begin position="7"/>
        <end position="48"/>
    </location>
</feature>
<gene>
    <name evidence="1" type="primary">rps18</name>
    <name type="ordered locus">PS147</name>
</gene>
<reference key="1">
    <citation type="journal article" date="2004" name="Curr. Genet.">
        <title>Structural features and transcript-editing analysis of sugarcane (Saccharum officinarum L.) chloroplast genome.</title>
        <authorList>
            <person name="Calsa T. Jr."/>
            <person name="Carraro D.M."/>
            <person name="Benatti M.R."/>
            <person name="Barbosa A.C."/>
            <person name="Kitajima J.P."/>
            <person name="Carrer H."/>
        </authorList>
    </citation>
    <scope>NUCLEOTIDE SEQUENCE [LARGE SCALE GENOMIC DNA]</scope>
    <source>
        <strain>cv. SP-80-3280</strain>
    </source>
</reference>
<dbReference type="EMBL" id="AE009947">
    <property type="protein sequence ID" value="AAT44713.1"/>
    <property type="molecule type" value="Genomic_DNA"/>
</dbReference>
<dbReference type="SMR" id="Q6L379"/>
<dbReference type="GO" id="GO:0009507">
    <property type="term" value="C:chloroplast"/>
    <property type="evidence" value="ECO:0007669"/>
    <property type="project" value="UniProtKB-SubCell"/>
</dbReference>
<dbReference type="GO" id="GO:0005763">
    <property type="term" value="C:mitochondrial small ribosomal subunit"/>
    <property type="evidence" value="ECO:0007669"/>
    <property type="project" value="TreeGrafter"/>
</dbReference>
<dbReference type="GO" id="GO:0070181">
    <property type="term" value="F:small ribosomal subunit rRNA binding"/>
    <property type="evidence" value="ECO:0007669"/>
    <property type="project" value="TreeGrafter"/>
</dbReference>
<dbReference type="GO" id="GO:0003735">
    <property type="term" value="F:structural constituent of ribosome"/>
    <property type="evidence" value="ECO:0007669"/>
    <property type="project" value="InterPro"/>
</dbReference>
<dbReference type="GO" id="GO:0006412">
    <property type="term" value="P:translation"/>
    <property type="evidence" value="ECO:0007669"/>
    <property type="project" value="UniProtKB-UniRule"/>
</dbReference>
<dbReference type="FunFam" id="4.10.640.10:FF:000002">
    <property type="entry name" value="30S ribosomal protein S18, chloroplastic"/>
    <property type="match status" value="1"/>
</dbReference>
<dbReference type="Gene3D" id="4.10.640.10">
    <property type="entry name" value="Ribosomal protein S18"/>
    <property type="match status" value="1"/>
</dbReference>
<dbReference type="HAMAP" id="MF_00270">
    <property type="entry name" value="Ribosomal_bS18"/>
    <property type="match status" value="1"/>
</dbReference>
<dbReference type="InterPro" id="IPR001648">
    <property type="entry name" value="Ribosomal_bS18"/>
</dbReference>
<dbReference type="InterPro" id="IPR018275">
    <property type="entry name" value="Ribosomal_bS18_CS"/>
</dbReference>
<dbReference type="InterPro" id="IPR036870">
    <property type="entry name" value="Ribosomal_bS18_sf"/>
</dbReference>
<dbReference type="NCBIfam" id="TIGR00165">
    <property type="entry name" value="S18"/>
    <property type="match status" value="1"/>
</dbReference>
<dbReference type="PANTHER" id="PTHR13479">
    <property type="entry name" value="30S RIBOSOMAL PROTEIN S18"/>
    <property type="match status" value="1"/>
</dbReference>
<dbReference type="PANTHER" id="PTHR13479:SF40">
    <property type="entry name" value="SMALL RIBOSOMAL SUBUNIT PROTEIN BS18M"/>
    <property type="match status" value="1"/>
</dbReference>
<dbReference type="Pfam" id="PF01084">
    <property type="entry name" value="Ribosomal_S18"/>
    <property type="match status" value="1"/>
</dbReference>
<dbReference type="PRINTS" id="PR00974">
    <property type="entry name" value="RIBOSOMALS18"/>
</dbReference>
<dbReference type="SUPFAM" id="SSF46911">
    <property type="entry name" value="Ribosomal protein S18"/>
    <property type="match status" value="1"/>
</dbReference>
<dbReference type="PROSITE" id="PS00057">
    <property type="entry name" value="RIBOSOMAL_S18"/>
    <property type="match status" value="1"/>
</dbReference>
<geneLocation type="chloroplast"/>